<protein>
    <recommendedName>
        <fullName evidence="1">Glutamyl-tRNA reductase</fullName>
        <shortName evidence="1">GluTR</shortName>
        <ecNumber evidence="1">1.2.1.70</ecNumber>
    </recommendedName>
</protein>
<evidence type="ECO:0000255" key="1">
    <source>
        <dbReference type="HAMAP-Rule" id="MF_00087"/>
    </source>
</evidence>
<reference key="1">
    <citation type="journal article" date="2006" name="Environ. Microbiol.">
        <title>Whole genome analysis of the marine Bacteroidetes'Gramella forsetii' reveals adaptations to degradation of polymeric organic matter.</title>
        <authorList>
            <person name="Bauer M."/>
            <person name="Kube M."/>
            <person name="Teeling H."/>
            <person name="Richter M."/>
            <person name="Lombardot T."/>
            <person name="Allers E."/>
            <person name="Wuerdemann C.A."/>
            <person name="Quast C."/>
            <person name="Kuhl H."/>
            <person name="Knaust F."/>
            <person name="Woebken D."/>
            <person name="Bischof K."/>
            <person name="Mussmann M."/>
            <person name="Choudhuri J.V."/>
            <person name="Meyer F."/>
            <person name="Reinhardt R."/>
            <person name="Amann R.I."/>
            <person name="Gloeckner F.O."/>
        </authorList>
    </citation>
    <scope>NUCLEOTIDE SEQUENCE [LARGE SCALE GENOMIC DNA]</scope>
    <source>
        <strain>DSM 17595 / CGMCC 1.15422 / KT0803</strain>
    </source>
</reference>
<name>HEM1_CHRFK</name>
<sequence length="418" mass="47931">MEDYHISRGKHFYTIGLSYKKADAEIRGHFSLTEESKQRLLEQAKEEGIDGILVTSTCNRTEIYGFAQHPFQLIKLLCEHTHGTVEEFEKVAYVYKNKQAITHIFKVGTGLDSQILGDFEIISQLKIAFVRSKKLGLVNAFLERLVNAVIQASKRIKNETEISTGATSVSFASVQYILKHIDKVSEKNILLFGTGKIGRNTCENLVKHTRNNHITLINRTKDKAERIAGKFNLIVKDYADLQAEIRNSDILIVATGAQNPTISKELIYPKKELLILDLSIPKNVSDDVHELENVKLIHLDHLSQMTDETLEKRKQFIPQAKEIITEVESEFNRWLETRKFAPTIKALKKKLKTMKDDELDFQRKKISDFNDEQAEIVSNRIIQKIMKHFANHLKGDAETTDESLELIQKVFQLEEVNK</sequence>
<organism>
    <name type="scientific">Christiangramia forsetii (strain DSM 17595 / CGMCC 1.15422 / KT0803)</name>
    <name type="common">Gramella forsetii</name>
    <dbReference type="NCBI Taxonomy" id="411154"/>
    <lineage>
        <taxon>Bacteria</taxon>
        <taxon>Pseudomonadati</taxon>
        <taxon>Bacteroidota</taxon>
        <taxon>Flavobacteriia</taxon>
        <taxon>Flavobacteriales</taxon>
        <taxon>Flavobacteriaceae</taxon>
        <taxon>Christiangramia</taxon>
    </lineage>
</organism>
<keyword id="KW-0521">NADP</keyword>
<keyword id="KW-0560">Oxidoreductase</keyword>
<keyword id="KW-0627">Porphyrin biosynthesis</keyword>
<gene>
    <name evidence="1" type="primary">hemA</name>
    <name type="ordered locus">GFO_3223</name>
</gene>
<accession>A0M6C1</accession>
<feature type="chain" id="PRO_0000335042" description="Glutamyl-tRNA reductase">
    <location>
        <begin position="1"/>
        <end position="418"/>
    </location>
</feature>
<feature type="active site" description="Nucleophile" evidence="1">
    <location>
        <position position="58"/>
    </location>
</feature>
<feature type="binding site" evidence="1">
    <location>
        <begin position="57"/>
        <end position="60"/>
    </location>
    <ligand>
        <name>substrate</name>
    </ligand>
</feature>
<feature type="binding site" evidence="1">
    <location>
        <position position="113"/>
    </location>
    <ligand>
        <name>substrate</name>
    </ligand>
</feature>
<feature type="binding site" evidence="1">
    <location>
        <begin position="118"/>
        <end position="120"/>
    </location>
    <ligand>
        <name>substrate</name>
    </ligand>
</feature>
<feature type="binding site" evidence="1">
    <location>
        <position position="124"/>
    </location>
    <ligand>
        <name>substrate</name>
    </ligand>
</feature>
<feature type="binding site" evidence="1">
    <location>
        <begin position="193"/>
        <end position="198"/>
    </location>
    <ligand>
        <name>NADP(+)</name>
        <dbReference type="ChEBI" id="CHEBI:58349"/>
    </ligand>
</feature>
<feature type="site" description="Important for activity" evidence="1">
    <location>
        <position position="103"/>
    </location>
</feature>
<proteinExistence type="inferred from homology"/>
<comment type="function">
    <text evidence="1">Catalyzes the NADPH-dependent reduction of glutamyl-tRNA(Glu) to glutamate 1-semialdehyde (GSA).</text>
</comment>
<comment type="catalytic activity">
    <reaction evidence="1">
        <text>(S)-4-amino-5-oxopentanoate + tRNA(Glu) + NADP(+) = L-glutamyl-tRNA(Glu) + NADPH + H(+)</text>
        <dbReference type="Rhea" id="RHEA:12344"/>
        <dbReference type="Rhea" id="RHEA-COMP:9663"/>
        <dbReference type="Rhea" id="RHEA-COMP:9680"/>
        <dbReference type="ChEBI" id="CHEBI:15378"/>
        <dbReference type="ChEBI" id="CHEBI:57501"/>
        <dbReference type="ChEBI" id="CHEBI:57783"/>
        <dbReference type="ChEBI" id="CHEBI:58349"/>
        <dbReference type="ChEBI" id="CHEBI:78442"/>
        <dbReference type="ChEBI" id="CHEBI:78520"/>
        <dbReference type="EC" id="1.2.1.70"/>
    </reaction>
</comment>
<comment type="pathway">
    <text evidence="1">Porphyrin-containing compound metabolism; protoporphyrin-IX biosynthesis; 5-aminolevulinate from L-glutamyl-tRNA(Glu): step 1/2.</text>
</comment>
<comment type="subunit">
    <text evidence="1">Homodimer.</text>
</comment>
<comment type="domain">
    <text evidence="1">Possesses an unusual extended V-shaped dimeric structure with each monomer consisting of three distinct domains arranged along a curved 'spinal' alpha-helix. The N-terminal catalytic domain specifically recognizes the glutamate moiety of the substrate. The second domain is the NADPH-binding domain, and the third C-terminal domain is responsible for dimerization.</text>
</comment>
<comment type="miscellaneous">
    <text evidence="1">During catalysis, the active site Cys acts as a nucleophile attacking the alpha-carbonyl group of tRNA-bound glutamate with the formation of a thioester intermediate between enzyme and glutamate, and the concomitant release of tRNA(Glu). The thioester intermediate is finally reduced by direct hydride transfer from NADPH, to form the product GSA.</text>
</comment>
<comment type="similarity">
    <text evidence="1">Belongs to the glutamyl-tRNA reductase family.</text>
</comment>
<dbReference type="EC" id="1.2.1.70" evidence="1"/>
<dbReference type="EMBL" id="CU207366">
    <property type="protein sequence ID" value="CAL68166.1"/>
    <property type="molecule type" value="Genomic_DNA"/>
</dbReference>
<dbReference type="RefSeq" id="WP_011711067.1">
    <property type="nucleotide sequence ID" value="NC_008571.1"/>
</dbReference>
<dbReference type="SMR" id="A0M6C1"/>
<dbReference type="STRING" id="411154.GFO_3223"/>
<dbReference type="KEGG" id="gfo:GFO_3223"/>
<dbReference type="eggNOG" id="COG0373">
    <property type="taxonomic scope" value="Bacteria"/>
</dbReference>
<dbReference type="HOGENOM" id="CLU_035113_2_2_10"/>
<dbReference type="OrthoDB" id="110209at2"/>
<dbReference type="UniPathway" id="UPA00251">
    <property type="reaction ID" value="UER00316"/>
</dbReference>
<dbReference type="Proteomes" id="UP000000755">
    <property type="component" value="Chromosome"/>
</dbReference>
<dbReference type="GO" id="GO:0008883">
    <property type="term" value="F:glutamyl-tRNA reductase activity"/>
    <property type="evidence" value="ECO:0007669"/>
    <property type="project" value="UniProtKB-UniRule"/>
</dbReference>
<dbReference type="GO" id="GO:0050661">
    <property type="term" value="F:NADP binding"/>
    <property type="evidence" value="ECO:0007669"/>
    <property type="project" value="InterPro"/>
</dbReference>
<dbReference type="GO" id="GO:0019353">
    <property type="term" value="P:protoporphyrinogen IX biosynthetic process from glutamate"/>
    <property type="evidence" value="ECO:0007669"/>
    <property type="project" value="TreeGrafter"/>
</dbReference>
<dbReference type="FunFam" id="3.30.460.30:FF:000001">
    <property type="entry name" value="Glutamyl-tRNA reductase"/>
    <property type="match status" value="1"/>
</dbReference>
<dbReference type="Gene3D" id="3.30.460.30">
    <property type="entry name" value="Glutamyl-tRNA reductase, N-terminal domain"/>
    <property type="match status" value="1"/>
</dbReference>
<dbReference type="Gene3D" id="3.40.50.720">
    <property type="entry name" value="NAD(P)-binding Rossmann-like Domain"/>
    <property type="match status" value="1"/>
</dbReference>
<dbReference type="HAMAP" id="MF_00087">
    <property type="entry name" value="Glu_tRNA_reductase"/>
    <property type="match status" value="1"/>
</dbReference>
<dbReference type="InterPro" id="IPR000343">
    <property type="entry name" value="4pyrrol_synth_GluRdtase"/>
</dbReference>
<dbReference type="InterPro" id="IPR015896">
    <property type="entry name" value="4pyrrol_synth_GluRdtase_dimer"/>
</dbReference>
<dbReference type="InterPro" id="IPR015895">
    <property type="entry name" value="4pyrrol_synth_GluRdtase_N"/>
</dbReference>
<dbReference type="InterPro" id="IPR018214">
    <property type="entry name" value="GluRdtase_CS"/>
</dbReference>
<dbReference type="InterPro" id="IPR036453">
    <property type="entry name" value="GluRdtase_dimer_dom_sf"/>
</dbReference>
<dbReference type="InterPro" id="IPR036343">
    <property type="entry name" value="GluRdtase_N_sf"/>
</dbReference>
<dbReference type="InterPro" id="IPR036291">
    <property type="entry name" value="NAD(P)-bd_dom_sf"/>
</dbReference>
<dbReference type="InterPro" id="IPR006151">
    <property type="entry name" value="Shikm_DH/Glu-tRNA_Rdtase"/>
</dbReference>
<dbReference type="NCBIfam" id="TIGR01035">
    <property type="entry name" value="hemA"/>
    <property type="match status" value="1"/>
</dbReference>
<dbReference type="PANTHER" id="PTHR43013">
    <property type="entry name" value="GLUTAMYL-TRNA REDUCTASE"/>
    <property type="match status" value="1"/>
</dbReference>
<dbReference type="PANTHER" id="PTHR43013:SF1">
    <property type="entry name" value="GLUTAMYL-TRNA REDUCTASE"/>
    <property type="match status" value="1"/>
</dbReference>
<dbReference type="Pfam" id="PF00745">
    <property type="entry name" value="GlutR_dimer"/>
    <property type="match status" value="1"/>
</dbReference>
<dbReference type="Pfam" id="PF05201">
    <property type="entry name" value="GlutR_N"/>
    <property type="match status" value="1"/>
</dbReference>
<dbReference type="Pfam" id="PF01488">
    <property type="entry name" value="Shikimate_DH"/>
    <property type="match status" value="1"/>
</dbReference>
<dbReference type="PIRSF" id="PIRSF000445">
    <property type="entry name" value="4pyrrol_synth_GluRdtase"/>
    <property type="match status" value="1"/>
</dbReference>
<dbReference type="SUPFAM" id="SSF69742">
    <property type="entry name" value="Glutamyl tRNA-reductase catalytic, N-terminal domain"/>
    <property type="match status" value="1"/>
</dbReference>
<dbReference type="SUPFAM" id="SSF69075">
    <property type="entry name" value="Glutamyl tRNA-reductase dimerization domain"/>
    <property type="match status" value="1"/>
</dbReference>
<dbReference type="SUPFAM" id="SSF51735">
    <property type="entry name" value="NAD(P)-binding Rossmann-fold domains"/>
    <property type="match status" value="1"/>
</dbReference>
<dbReference type="PROSITE" id="PS00747">
    <property type="entry name" value="GLUTR"/>
    <property type="match status" value="1"/>
</dbReference>